<accession>Q5X9Q9</accession>
<evidence type="ECO:0000250" key="1"/>
<evidence type="ECO:0000255" key="2"/>
<evidence type="ECO:0000255" key="3">
    <source>
        <dbReference type="PROSITE-ProRule" id="PRU00477"/>
    </source>
</evidence>
<evidence type="ECO:0000255" key="4">
    <source>
        <dbReference type="PROSITE-ProRule" id="PRU01372"/>
    </source>
</evidence>
<evidence type="ECO:0000255" key="5">
    <source>
        <dbReference type="PROSITE-ProRule" id="PRU01374"/>
    </source>
</evidence>
<evidence type="ECO:0000256" key="6">
    <source>
        <dbReference type="SAM" id="MobiDB-lite"/>
    </source>
</evidence>
<evidence type="ECO:0000305" key="7"/>
<reference key="1">
    <citation type="journal article" date="2004" name="J. Infect. Dis.">
        <title>Progress toward characterization of the group A Streptococcus metagenome: complete genome sequence of a macrolide-resistant serotype M6 strain.</title>
        <authorList>
            <person name="Banks D.J."/>
            <person name="Porcella S.F."/>
            <person name="Barbian K.D."/>
            <person name="Beres S.B."/>
            <person name="Philips L.E."/>
            <person name="Voyich J.M."/>
            <person name="DeLeo F.R."/>
            <person name="Martin J.M."/>
            <person name="Somerville G.A."/>
            <person name="Musser J.M."/>
        </authorList>
    </citation>
    <scope>NUCLEOTIDE SEQUENCE [LARGE SCALE GENOMIC DNA]</scope>
    <source>
        <strain>ATCC BAA-946 / MGAS10394</strain>
    </source>
</reference>
<keyword id="KW-0134">Cell wall</keyword>
<keyword id="KW-0175">Coiled coil</keyword>
<keyword id="KW-0572">Peptidoglycan-anchor</keyword>
<keyword id="KW-0581">Phagocytosis</keyword>
<keyword id="KW-0677">Repeat</keyword>
<keyword id="KW-0964">Secreted</keyword>
<keyword id="KW-0732">Signal</keyword>
<keyword id="KW-0843">Virulence</keyword>
<sequence>MAKNNTNRHYSLRKLKKGTASVAVALSVIGAGLVVNTNEVSARVFPRGTVENPDKARELLNKYDVENSMLQANNDKLTTENKNLTDQNKELKAEENRLTTENKGLTKKLSEAEEEAANKEQESKETIGTLKKILDETVKDKIAREQKSKQDIGALKQELAKKDEGNKVSEASRKGLRRDLDASREAKKQVEKDLANLTAELDKVKEEKQISDASRKGLRRDLDASREAKKQVEKDLANLTAELDKVKEEKQISDASRQGLRRDLDASREAKKQVEKALEEANSKLAALEKLNKELEESKKLTEKEKAELQAKLEAEAKALKEQLAKQAEELAKLRAGKASDSQTPDAKPGNKVVPGKGQAPQAGTKPNQNKAPMKETKRQLPSTGETANPFFTAAALTVMATAGVAAVVKRKEEN</sequence>
<gene>
    <name type="primary">emm6</name>
    <name type="ordered locus">M6_Spy1719</name>
</gene>
<proteinExistence type="inferred from homology"/>
<dbReference type="EMBL" id="CP000003">
    <property type="protein sequence ID" value="AAT87854.1"/>
    <property type="molecule type" value="Genomic_DNA"/>
</dbReference>
<dbReference type="RefSeq" id="WP_011185015.1">
    <property type="nucleotide sequence ID" value="NC_006086.1"/>
</dbReference>
<dbReference type="SMR" id="Q5X9Q9"/>
<dbReference type="KEGG" id="spa:M6_Spy1719"/>
<dbReference type="HOGENOM" id="CLU_033717_0_0_9"/>
<dbReference type="Proteomes" id="UP000001167">
    <property type="component" value="Chromosome"/>
</dbReference>
<dbReference type="GO" id="GO:0005576">
    <property type="term" value="C:extracellular region"/>
    <property type="evidence" value="ECO:0007669"/>
    <property type="project" value="UniProtKB-KW"/>
</dbReference>
<dbReference type="GO" id="GO:0006909">
    <property type="term" value="P:phagocytosis"/>
    <property type="evidence" value="ECO:0007669"/>
    <property type="project" value="UniProtKB-KW"/>
</dbReference>
<dbReference type="Gene3D" id="6.10.250.460">
    <property type="match status" value="3"/>
</dbReference>
<dbReference type="InterPro" id="IPR019931">
    <property type="entry name" value="LPXTG_anchor"/>
</dbReference>
<dbReference type="InterPro" id="IPR019950">
    <property type="entry name" value="M_anchor"/>
</dbReference>
<dbReference type="InterPro" id="IPR049896">
    <property type="entry name" value="SMCR"/>
</dbReference>
<dbReference type="InterPro" id="IPR049895">
    <property type="entry name" value="SMDRR"/>
</dbReference>
<dbReference type="InterPro" id="IPR005877">
    <property type="entry name" value="YSIRK_signal_dom"/>
</dbReference>
<dbReference type="NCBIfam" id="TIGR01167">
    <property type="entry name" value="LPXTG_anchor"/>
    <property type="match status" value="1"/>
</dbReference>
<dbReference type="NCBIfam" id="NF033777">
    <property type="entry name" value="M_group_A_cterm"/>
    <property type="match status" value="1"/>
</dbReference>
<dbReference type="NCBIfam" id="TIGR01168">
    <property type="entry name" value="YSIRK_signal"/>
    <property type="match status" value="1"/>
</dbReference>
<dbReference type="Pfam" id="PF00746">
    <property type="entry name" value="Gram_pos_anchor"/>
    <property type="match status" value="1"/>
</dbReference>
<dbReference type="Pfam" id="PF04650">
    <property type="entry name" value="YSIRK_signal"/>
    <property type="match status" value="1"/>
</dbReference>
<dbReference type="PRINTS" id="PR00015">
    <property type="entry name" value="GPOSANCHOR"/>
</dbReference>
<dbReference type="PROSITE" id="PS50847">
    <property type="entry name" value="GRAM_POS_ANCHORING"/>
    <property type="match status" value="1"/>
</dbReference>
<dbReference type="PROSITE" id="PS52028">
    <property type="entry name" value="SMCR"/>
    <property type="match status" value="3"/>
</dbReference>
<dbReference type="PROSITE" id="PS52030">
    <property type="entry name" value="SMDRR"/>
    <property type="match status" value="1"/>
</dbReference>
<feature type="signal peptide" evidence="2">
    <location>
        <begin position="1"/>
        <end position="42"/>
    </location>
</feature>
<feature type="chain" id="PRO_0000005617" description="M protein, serotype 6">
    <location>
        <begin position="43"/>
        <end position="384"/>
    </location>
</feature>
<feature type="propeptide" id="PRO_0000005618" description="Removed by sortase" evidence="3">
    <location>
        <begin position="385"/>
        <end position="415"/>
    </location>
</feature>
<feature type="repeat" description="1">
    <location>
        <begin position="69"/>
        <end position="75"/>
    </location>
</feature>
<feature type="repeat" description="2">
    <location>
        <begin position="76"/>
        <end position="82"/>
    </location>
</feature>
<feature type="repeat" description="3">
    <location>
        <begin position="83"/>
        <end position="89"/>
    </location>
</feature>
<feature type="repeat" description="4; approximate">
    <location>
        <begin position="90"/>
        <end position="96"/>
    </location>
</feature>
<feature type="repeat" description="5">
    <location>
        <begin position="97"/>
        <end position="103"/>
    </location>
</feature>
<feature type="repeat" description="C 1" evidence="4">
    <location>
        <begin position="160"/>
        <end position="194"/>
    </location>
</feature>
<feature type="repeat" description="C 2" evidence="4">
    <location>
        <begin position="202"/>
        <end position="236"/>
    </location>
</feature>
<feature type="repeat" description="C 3" evidence="4">
    <location>
        <begin position="244"/>
        <end position="278"/>
    </location>
</feature>
<feature type="repeat" description="D 1" evidence="5">
    <location>
        <begin position="311"/>
        <end position="316"/>
    </location>
</feature>
<feature type="repeat" description="D 2" evidence="5">
    <location>
        <begin position="317"/>
        <end position="322"/>
    </location>
</feature>
<feature type="repeat" description="D 3" evidence="5">
    <location>
        <begin position="325"/>
        <end position="330"/>
    </location>
</feature>
<feature type="repeat" description="D 4" evidence="5">
    <location>
        <begin position="332"/>
        <end position="337"/>
    </location>
</feature>
<feature type="region of interest" description="5 X 7 AA approximate tandem repeats of [KMNR]-L-[TQ]-[TDA]-[ENQ]-N-[NDK]">
    <location>
        <begin position="69"/>
        <end position="103"/>
    </location>
</feature>
<feature type="region of interest" description="Disordered" evidence="6">
    <location>
        <begin position="75"/>
        <end position="125"/>
    </location>
</feature>
<feature type="region of interest" description="Disordered" evidence="6">
    <location>
        <begin position="157"/>
        <end position="189"/>
    </location>
</feature>
<feature type="region of interest" description="Disordered" evidence="6">
    <location>
        <begin position="202"/>
        <end position="231"/>
    </location>
</feature>
<feature type="region of interest" description="Binding to CD46" evidence="1">
    <location>
        <begin position="211"/>
        <end position="279"/>
    </location>
</feature>
<feature type="region of interest" description="Two directly repeated 27 amino acid blocks separated by 15 amino acids">
    <location>
        <begin position="211"/>
        <end position="279"/>
    </location>
</feature>
<feature type="region of interest" description="Disordered" evidence="6">
    <location>
        <begin position="247"/>
        <end position="277"/>
    </location>
</feature>
<feature type="region of interest" description="Hydrophilic">
    <location>
        <begin position="280"/>
        <end position="343"/>
    </location>
</feature>
<feature type="region of interest" description="Disordered" evidence="6">
    <location>
        <begin position="332"/>
        <end position="387"/>
    </location>
</feature>
<feature type="coiled-coil region" evidence="2">
    <location>
        <begin position="54"/>
        <end position="133"/>
    </location>
</feature>
<feature type="coiled-coil region" evidence="2">
    <location>
        <begin position="170"/>
        <end position="340"/>
    </location>
</feature>
<feature type="short sequence motif" description="LPXTG sorting signal" evidence="3">
    <location>
        <begin position="381"/>
        <end position="385"/>
    </location>
</feature>
<feature type="compositionally biased region" description="Polar residues" evidence="6">
    <location>
        <begin position="75"/>
        <end position="86"/>
    </location>
</feature>
<feature type="compositionally biased region" description="Basic and acidic residues" evidence="6">
    <location>
        <begin position="87"/>
        <end position="100"/>
    </location>
</feature>
<feature type="compositionally biased region" description="Basic and acidic residues" evidence="6">
    <location>
        <begin position="108"/>
        <end position="125"/>
    </location>
</feature>
<feature type="compositionally biased region" description="Basic and acidic residues" evidence="6">
    <location>
        <begin position="158"/>
        <end position="189"/>
    </location>
</feature>
<feature type="compositionally biased region" description="Basic and acidic residues" evidence="6">
    <location>
        <begin position="260"/>
        <end position="277"/>
    </location>
</feature>
<feature type="modified residue" description="Pentaglycyl murein peptidoglycan amidated threonine" evidence="3">
    <location>
        <position position="384"/>
    </location>
</feature>
<organism>
    <name type="scientific">Streptococcus pyogenes serotype M6 (strain ATCC BAA-946 / MGAS10394)</name>
    <dbReference type="NCBI Taxonomy" id="286636"/>
    <lineage>
        <taxon>Bacteria</taxon>
        <taxon>Bacillati</taxon>
        <taxon>Bacillota</taxon>
        <taxon>Bacilli</taxon>
        <taxon>Lactobacillales</taxon>
        <taxon>Streptococcaceae</taxon>
        <taxon>Streptococcus</taxon>
    </lineage>
</organism>
<comment type="function">
    <text evidence="1">Mediates the attachment of S.pyogenes to skin epithelial cells through the binding of the human membrane cofactor protein CD46. Also binds to the factor H and factor H-like protein 1. These interactions could contribute to the fact that the M6 protein protects the bacterium from the phagocytosis by regulating the complement activation on the bacterial surface (By similarity).</text>
</comment>
<comment type="subcellular location">
    <subcellularLocation>
        <location evidence="3">Secreted</location>
        <location evidence="3">Cell wall</location>
        <topology evidence="3">Peptidoglycan-anchor</topology>
    </subcellularLocation>
</comment>
<comment type="similarity">
    <text evidence="7">Belongs to the M protein family.</text>
</comment>
<protein>
    <recommendedName>
        <fullName>M protein, serotype 6</fullName>
    </recommendedName>
</protein>
<name>M6A_STRP6</name>